<comment type="similarity">
    <text evidence="1">Belongs to the RemA family.</text>
</comment>
<name>Y2696_SYNJA</name>
<gene>
    <name type="ordered locus">CYA_2696</name>
</gene>
<evidence type="ECO:0000255" key="1">
    <source>
        <dbReference type="HAMAP-Rule" id="MF_01503"/>
    </source>
</evidence>
<feature type="chain" id="PRO_0000236638" description="Putative regulatory protein CYA_2696">
    <location>
        <begin position="1"/>
        <end position="89"/>
    </location>
</feature>
<accession>Q2JQC0</accession>
<dbReference type="EMBL" id="CP000239">
    <property type="protein sequence ID" value="ABD00806.1"/>
    <property type="molecule type" value="Genomic_DNA"/>
</dbReference>
<dbReference type="SMR" id="Q2JQC0"/>
<dbReference type="STRING" id="321327.CYA_2696"/>
<dbReference type="KEGG" id="cya:CYA_2696"/>
<dbReference type="eggNOG" id="COG2052">
    <property type="taxonomic scope" value="Bacteria"/>
</dbReference>
<dbReference type="HOGENOM" id="CLU_165326_0_0_3"/>
<dbReference type="OrthoDB" id="5432174at2"/>
<dbReference type="Proteomes" id="UP000008818">
    <property type="component" value="Chromosome"/>
</dbReference>
<dbReference type="HAMAP" id="MF_01503">
    <property type="entry name" value="RemA"/>
    <property type="match status" value="1"/>
</dbReference>
<dbReference type="InterPro" id="IPR007169">
    <property type="entry name" value="RemA-like"/>
</dbReference>
<dbReference type="NCBIfam" id="NF046064">
    <property type="entry name" value="MtxBflmRegRemA"/>
    <property type="match status" value="1"/>
</dbReference>
<dbReference type="NCBIfam" id="NF003315">
    <property type="entry name" value="PRK04323.1"/>
    <property type="match status" value="1"/>
</dbReference>
<dbReference type="PANTHER" id="PTHR38449:SF1">
    <property type="entry name" value="REGULATORY PROTEIN SSL2874-RELATED"/>
    <property type="match status" value="1"/>
</dbReference>
<dbReference type="PANTHER" id="PTHR38449">
    <property type="entry name" value="REGULATORY PROTEIN TM_1690-RELATED"/>
    <property type="match status" value="1"/>
</dbReference>
<dbReference type="Pfam" id="PF04025">
    <property type="entry name" value="RemA-like"/>
    <property type="match status" value="1"/>
</dbReference>
<protein>
    <recommendedName>
        <fullName evidence="1">Putative regulatory protein CYA_2696</fullName>
    </recommendedName>
</protein>
<proteinExistence type="inferred from homology"/>
<reference key="1">
    <citation type="journal article" date="2007" name="ISME J.">
        <title>Population level functional diversity in a microbial community revealed by comparative genomic and metagenomic analyses.</title>
        <authorList>
            <person name="Bhaya D."/>
            <person name="Grossman A.R."/>
            <person name="Steunou A.-S."/>
            <person name="Khuri N."/>
            <person name="Cohan F.M."/>
            <person name="Hamamura N."/>
            <person name="Melendrez M.C."/>
            <person name="Bateson M.M."/>
            <person name="Ward D.M."/>
            <person name="Heidelberg J.F."/>
        </authorList>
    </citation>
    <scope>NUCLEOTIDE SEQUENCE [LARGE SCALE GENOMIC DNA]</scope>
    <source>
        <strain>JA-3-3Ab</strain>
    </source>
</reference>
<sequence length="89" mass="9552">MDTRLINIGFGNIVAAGRVIAIVSPESAPIKRIISDARERGQLVDATYGRRTRAVIITDSGHVILSAIQPETVANRFLTAKVGAPEEPE</sequence>
<organism>
    <name type="scientific">Synechococcus sp. (strain JA-3-3Ab)</name>
    <name type="common">Cyanobacteria bacterium Yellowstone A-Prime</name>
    <dbReference type="NCBI Taxonomy" id="321327"/>
    <lineage>
        <taxon>Bacteria</taxon>
        <taxon>Bacillati</taxon>
        <taxon>Cyanobacteriota</taxon>
        <taxon>Cyanophyceae</taxon>
        <taxon>Synechococcales</taxon>
        <taxon>Synechococcaceae</taxon>
        <taxon>Synechococcus</taxon>
    </lineage>
</organism>